<evidence type="ECO:0000255" key="1">
    <source>
        <dbReference type="HAMAP-Rule" id="MF_00203"/>
    </source>
</evidence>
<sequence length="620" mass="71504">MFDFQHQLKILPDKPGVYIMKNSLGEVIYVGKAKVLKNRVRQYFQNSKNHSEKVRAMVKNIAEFEYIVTDSEMEALILECNLIKKYSPRYNIALKDDKFYPFIKITTNEDFPRVYVTRNFAKDGNRYFGPYTNGTAVYEVMGLIKKLFPLRTCKKAIVEGGEPTRACLNYHINLCKAPCAGYISKAEYWKMIDEIINILNGTDTSIIKNLKLEMEKAAEELEFEKAAKIRDRILAIELISEKQKMFTVKEGDEDFIDLYTDEKDGCAQVFFVREGKVTGREHFMIENISDDPVKEVISSFIASFYGGTAQIPKTIYVPEEIEDQELIEKFLTEKRGSKVWIKVPKKGDKKNLLDMVRNNAKIMLDQFKEKMVEEKELNKSALIELADVLGLDSLPTRIEAYDISNIQGVDSVGTMVVFENGKAKNSDYRRFKIKSVKGPNDYESMREILSRRFSHGLEEVNKIKERNLEYSKGKFCIFPDLIMMDGGKGQVNIALEVLKDFGIEIPVCGLVKDDKHRTRGIIFNNEEILIRRGSGLMNLITRVQDEVHRYAITYHRSLRDKRTLHSILEDIPRIGEKRRRNLLMKFGSIDNIKKASMEELLDTPGIDKRAAESIKQYFSS</sequence>
<reference key="1">
    <citation type="journal article" date="2006" name="Genome Res.">
        <title>Skewed genomic variability in strains of the toxigenic bacterial pathogen, Clostridium perfringens.</title>
        <authorList>
            <person name="Myers G.S.A."/>
            <person name="Rasko D.A."/>
            <person name="Cheung J.K."/>
            <person name="Ravel J."/>
            <person name="Seshadri R."/>
            <person name="DeBoy R.T."/>
            <person name="Ren Q."/>
            <person name="Varga J."/>
            <person name="Awad M.M."/>
            <person name="Brinkac L.M."/>
            <person name="Daugherty S.C."/>
            <person name="Haft D.H."/>
            <person name="Dodson R.J."/>
            <person name="Madupu R."/>
            <person name="Nelson W.C."/>
            <person name="Rosovitz M.J."/>
            <person name="Sullivan S.A."/>
            <person name="Khouri H."/>
            <person name="Dimitrov G.I."/>
            <person name="Watkins K.L."/>
            <person name="Mulligan S."/>
            <person name="Benton J."/>
            <person name="Radune D."/>
            <person name="Fisher D.J."/>
            <person name="Atkins H.S."/>
            <person name="Hiscox T."/>
            <person name="Jost B.H."/>
            <person name="Billington S.J."/>
            <person name="Songer J.G."/>
            <person name="McClane B.A."/>
            <person name="Titball R.W."/>
            <person name="Rood J.I."/>
            <person name="Melville S.B."/>
            <person name="Paulsen I.T."/>
        </authorList>
    </citation>
    <scope>NUCLEOTIDE SEQUENCE [LARGE SCALE GENOMIC DNA]</scope>
    <source>
        <strain>SM101 / Type A</strain>
    </source>
</reference>
<gene>
    <name evidence="1" type="primary">uvrC</name>
    <name type="ordered locus">CPR_0333</name>
</gene>
<accession>Q0SW38</accession>
<proteinExistence type="inferred from homology"/>
<feature type="chain" id="PRO_0000264886" description="UvrABC system protein C">
    <location>
        <begin position="1"/>
        <end position="620"/>
    </location>
</feature>
<feature type="domain" description="GIY-YIG" evidence="1">
    <location>
        <begin position="13"/>
        <end position="92"/>
    </location>
</feature>
<feature type="domain" description="UVR" evidence="1">
    <location>
        <begin position="204"/>
        <end position="239"/>
    </location>
</feature>
<protein>
    <recommendedName>
        <fullName evidence="1">UvrABC system protein C</fullName>
        <shortName evidence="1">Protein UvrC</shortName>
    </recommendedName>
    <alternativeName>
        <fullName evidence="1">Excinuclease ABC subunit C</fullName>
    </alternativeName>
</protein>
<keyword id="KW-0963">Cytoplasm</keyword>
<keyword id="KW-0227">DNA damage</keyword>
<keyword id="KW-0228">DNA excision</keyword>
<keyword id="KW-0234">DNA repair</keyword>
<keyword id="KW-0267">Excision nuclease</keyword>
<keyword id="KW-0742">SOS response</keyword>
<name>UVRC_CLOPS</name>
<comment type="function">
    <text evidence="1">The UvrABC repair system catalyzes the recognition and processing of DNA lesions. UvrC both incises the 5' and 3' sides of the lesion. The N-terminal half is responsible for the 3' incision and the C-terminal half is responsible for the 5' incision.</text>
</comment>
<comment type="subunit">
    <text evidence="1">Interacts with UvrB in an incision complex.</text>
</comment>
<comment type="subcellular location">
    <subcellularLocation>
        <location evidence="1">Cytoplasm</location>
    </subcellularLocation>
</comment>
<comment type="similarity">
    <text evidence="1">Belongs to the UvrC family.</text>
</comment>
<dbReference type="EMBL" id="CP000312">
    <property type="protein sequence ID" value="ABG86302.1"/>
    <property type="molecule type" value="Genomic_DNA"/>
</dbReference>
<dbReference type="RefSeq" id="WP_011591452.1">
    <property type="nucleotide sequence ID" value="NC_008262.1"/>
</dbReference>
<dbReference type="SMR" id="Q0SW38"/>
<dbReference type="KEGG" id="cpr:CPR_0333"/>
<dbReference type="Proteomes" id="UP000001824">
    <property type="component" value="Chromosome"/>
</dbReference>
<dbReference type="GO" id="GO:0005737">
    <property type="term" value="C:cytoplasm"/>
    <property type="evidence" value="ECO:0007669"/>
    <property type="project" value="UniProtKB-SubCell"/>
</dbReference>
<dbReference type="GO" id="GO:0009380">
    <property type="term" value="C:excinuclease repair complex"/>
    <property type="evidence" value="ECO:0007669"/>
    <property type="project" value="InterPro"/>
</dbReference>
<dbReference type="GO" id="GO:0003677">
    <property type="term" value="F:DNA binding"/>
    <property type="evidence" value="ECO:0007669"/>
    <property type="project" value="UniProtKB-UniRule"/>
</dbReference>
<dbReference type="GO" id="GO:0009381">
    <property type="term" value="F:excinuclease ABC activity"/>
    <property type="evidence" value="ECO:0007669"/>
    <property type="project" value="UniProtKB-UniRule"/>
</dbReference>
<dbReference type="GO" id="GO:0006289">
    <property type="term" value="P:nucleotide-excision repair"/>
    <property type="evidence" value="ECO:0007669"/>
    <property type="project" value="UniProtKB-UniRule"/>
</dbReference>
<dbReference type="GO" id="GO:0009432">
    <property type="term" value="P:SOS response"/>
    <property type="evidence" value="ECO:0007669"/>
    <property type="project" value="UniProtKB-UniRule"/>
</dbReference>
<dbReference type="CDD" id="cd10434">
    <property type="entry name" value="GIY-YIG_UvrC_Cho"/>
    <property type="match status" value="1"/>
</dbReference>
<dbReference type="FunFam" id="3.40.1440.10:FF:000001">
    <property type="entry name" value="UvrABC system protein C"/>
    <property type="match status" value="1"/>
</dbReference>
<dbReference type="Gene3D" id="1.10.150.20">
    <property type="entry name" value="5' to 3' exonuclease, C-terminal subdomain"/>
    <property type="match status" value="1"/>
</dbReference>
<dbReference type="Gene3D" id="3.40.1440.10">
    <property type="entry name" value="GIY-YIG endonuclease"/>
    <property type="match status" value="1"/>
</dbReference>
<dbReference type="Gene3D" id="4.10.860.10">
    <property type="entry name" value="UVR domain"/>
    <property type="match status" value="1"/>
</dbReference>
<dbReference type="Gene3D" id="3.30.420.340">
    <property type="entry name" value="UvrC, RNAse H endonuclease domain"/>
    <property type="match status" value="1"/>
</dbReference>
<dbReference type="HAMAP" id="MF_00203">
    <property type="entry name" value="UvrC"/>
    <property type="match status" value="1"/>
</dbReference>
<dbReference type="InterPro" id="IPR041663">
    <property type="entry name" value="DisA/LigA_HHH"/>
</dbReference>
<dbReference type="InterPro" id="IPR000305">
    <property type="entry name" value="GIY-YIG_endonuc"/>
</dbReference>
<dbReference type="InterPro" id="IPR035901">
    <property type="entry name" value="GIY-YIG_endonuc_sf"/>
</dbReference>
<dbReference type="InterPro" id="IPR047296">
    <property type="entry name" value="GIY-YIG_UvrC_Cho"/>
</dbReference>
<dbReference type="InterPro" id="IPR010994">
    <property type="entry name" value="RuvA_2-like"/>
</dbReference>
<dbReference type="InterPro" id="IPR001943">
    <property type="entry name" value="UVR_dom"/>
</dbReference>
<dbReference type="InterPro" id="IPR036876">
    <property type="entry name" value="UVR_dom_sf"/>
</dbReference>
<dbReference type="InterPro" id="IPR050066">
    <property type="entry name" value="UvrABC_protein_C"/>
</dbReference>
<dbReference type="InterPro" id="IPR004791">
    <property type="entry name" value="UvrC"/>
</dbReference>
<dbReference type="InterPro" id="IPR001162">
    <property type="entry name" value="UvrC_RNase_H_dom"/>
</dbReference>
<dbReference type="InterPro" id="IPR038476">
    <property type="entry name" value="UvrC_RNase_H_dom_sf"/>
</dbReference>
<dbReference type="NCBIfam" id="NF001824">
    <property type="entry name" value="PRK00558.1-5"/>
    <property type="match status" value="1"/>
</dbReference>
<dbReference type="NCBIfam" id="TIGR00194">
    <property type="entry name" value="uvrC"/>
    <property type="match status" value="1"/>
</dbReference>
<dbReference type="PANTHER" id="PTHR30562:SF1">
    <property type="entry name" value="UVRABC SYSTEM PROTEIN C"/>
    <property type="match status" value="1"/>
</dbReference>
<dbReference type="PANTHER" id="PTHR30562">
    <property type="entry name" value="UVRC/OXIDOREDUCTASE"/>
    <property type="match status" value="1"/>
</dbReference>
<dbReference type="Pfam" id="PF01541">
    <property type="entry name" value="GIY-YIG"/>
    <property type="match status" value="1"/>
</dbReference>
<dbReference type="Pfam" id="PF12826">
    <property type="entry name" value="HHH_2"/>
    <property type="match status" value="1"/>
</dbReference>
<dbReference type="Pfam" id="PF02151">
    <property type="entry name" value="UVR"/>
    <property type="match status" value="1"/>
</dbReference>
<dbReference type="Pfam" id="PF22920">
    <property type="entry name" value="UvrC_RNaseH"/>
    <property type="match status" value="1"/>
</dbReference>
<dbReference type="Pfam" id="PF08459">
    <property type="entry name" value="UvrC_RNaseH_dom"/>
    <property type="match status" value="1"/>
</dbReference>
<dbReference type="SMART" id="SM00465">
    <property type="entry name" value="GIYc"/>
    <property type="match status" value="1"/>
</dbReference>
<dbReference type="SUPFAM" id="SSF46600">
    <property type="entry name" value="C-terminal UvrC-binding domain of UvrB"/>
    <property type="match status" value="1"/>
</dbReference>
<dbReference type="SUPFAM" id="SSF82771">
    <property type="entry name" value="GIY-YIG endonuclease"/>
    <property type="match status" value="1"/>
</dbReference>
<dbReference type="SUPFAM" id="SSF47781">
    <property type="entry name" value="RuvA domain 2-like"/>
    <property type="match status" value="1"/>
</dbReference>
<dbReference type="PROSITE" id="PS50164">
    <property type="entry name" value="GIY_YIG"/>
    <property type="match status" value="1"/>
</dbReference>
<dbReference type="PROSITE" id="PS50151">
    <property type="entry name" value="UVR"/>
    <property type="match status" value="1"/>
</dbReference>
<dbReference type="PROSITE" id="PS50165">
    <property type="entry name" value="UVRC"/>
    <property type="match status" value="1"/>
</dbReference>
<organism>
    <name type="scientific">Clostridium perfringens (strain SM101 / Type A)</name>
    <dbReference type="NCBI Taxonomy" id="289380"/>
    <lineage>
        <taxon>Bacteria</taxon>
        <taxon>Bacillati</taxon>
        <taxon>Bacillota</taxon>
        <taxon>Clostridia</taxon>
        <taxon>Eubacteriales</taxon>
        <taxon>Clostridiaceae</taxon>
        <taxon>Clostridium</taxon>
    </lineage>
</organism>